<feature type="chain" id="PRO_0000355366" description="Cytochrome b6-f complex subunit 5">
    <location>
        <begin position="1"/>
        <end position="37"/>
    </location>
</feature>
<feature type="transmembrane region" description="Helical" evidence="1">
    <location>
        <begin position="5"/>
        <end position="25"/>
    </location>
</feature>
<protein>
    <recommendedName>
        <fullName evidence="1">Cytochrome b6-f complex subunit 5</fullName>
    </recommendedName>
    <alternativeName>
        <fullName evidence="1">Cytochrome b6-f complex subunit PetG</fullName>
    </alternativeName>
    <alternativeName>
        <fullName evidence="1">Cytochrome b6-f complex subunit V</fullName>
    </alternativeName>
</protein>
<dbReference type="EMBL" id="AP009367">
    <property type="protein sequence ID" value="BAF49873.1"/>
    <property type="molecule type" value="Genomic_DNA"/>
</dbReference>
<dbReference type="RefSeq" id="YP_001123049.1">
    <property type="nucleotide sequence ID" value="NC_009266.1"/>
</dbReference>
<dbReference type="SMR" id="A4QJL8"/>
<dbReference type="GeneID" id="4962313"/>
<dbReference type="GO" id="GO:0009535">
    <property type="term" value="C:chloroplast thylakoid membrane"/>
    <property type="evidence" value="ECO:0007669"/>
    <property type="project" value="UniProtKB-SubCell"/>
</dbReference>
<dbReference type="GO" id="GO:0009512">
    <property type="term" value="C:cytochrome b6f complex"/>
    <property type="evidence" value="ECO:0007669"/>
    <property type="project" value="InterPro"/>
</dbReference>
<dbReference type="GO" id="GO:0045158">
    <property type="term" value="F:electron transporter, transferring electrons within cytochrome b6/f complex of photosystem II activity"/>
    <property type="evidence" value="ECO:0007669"/>
    <property type="project" value="UniProtKB-UniRule"/>
</dbReference>
<dbReference type="GO" id="GO:0017004">
    <property type="term" value="P:cytochrome complex assembly"/>
    <property type="evidence" value="ECO:0007669"/>
    <property type="project" value="UniProtKB-UniRule"/>
</dbReference>
<dbReference type="GO" id="GO:0015979">
    <property type="term" value="P:photosynthesis"/>
    <property type="evidence" value="ECO:0007669"/>
    <property type="project" value="UniProtKB-KW"/>
</dbReference>
<dbReference type="HAMAP" id="MF_00432">
    <property type="entry name" value="Cytb6_f_PetG"/>
    <property type="match status" value="1"/>
</dbReference>
<dbReference type="InterPro" id="IPR003683">
    <property type="entry name" value="Cyt_6/f_cplx_su5"/>
</dbReference>
<dbReference type="InterPro" id="IPR036099">
    <property type="entry name" value="Cyt_6/f_cplx_su5_sf"/>
</dbReference>
<dbReference type="NCBIfam" id="NF001907">
    <property type="entry name" value="PRK00665.1"/>
    <property type="match status" value="1"/>
</dbReference>
<dbReference type="Pfam" id="PF02529">
    <property type="entry name" value="PetG"/>
    <property type="match status" value="1"/>
</dbReference>
<dbReference type="PIRSF" id="PIRSF000034">
    <property type="entry name" value="Cyt_b6-f_V"/>
    <property type="match status" value="1"/>
</dbReference>
<dbReference type="SUPFAM" id="SSF103446">
    <property type="entry name" value="PetG subunit of the cytochrome b6f complex"/>
    <property type="match status" value="1"/>
</dbReference>
<evidence type="ECO:0000255" key="1">
    <source>
        <dbReference type="HAMAP-Rule" id="MF_00432"/>
    </source>
</evidence>
<organism>
    <name type="scientific">Aethionema grandiflorum</name>
    <name type="common">Persian stone-cress</name>
    <dbReference type="NCBI Taxonomy" id="72657"/>
    <lineage>
        <taxon>Eukaryota</taxon>
        <taxon>Viridiplantae</taxon>
        <taxon>Streptophyta</taxon>
        <taxon>Embryophyta</taxon>
        <taxon>Tracheophyta</taxon>
        <taxon>Spermatophyta</taxon>
        <taxon>Magnoliopsida</taxon>
        <taxon>eudicotyledons</taxon>
        <taxon>Gunneridae</taxon>
        <taxon>Pentapetalae</taxon>
        <taxon>rosids</taxon>
        <taxon>malvids</taxon>
        <taxon>Brassicales</taxon>
        <taxon>Brassicaceae</taxon>
        <taxon>Aethionemeae</taxon>
        <taxon>Aethionema</taxon>
    </lineage>
</organism>
<keyword id="KW-0150">Chloroplast</keyword>
<keyword id="KW-0249">Electron transport</keyword>
<keyword id="KW-0472">Membrane</keyword>
<keyword id="KW-0602">Photosynthesis</keyword>
<keyword id="KW-0934">Plastid</keyword>
<keyword id="KW-0793">Thylakoid</keyword>
<keyword id="KW-0812">Transmembrane</keyword>
<keyword id="KW-1133">Transmembrane helix</keyword>
<keyword id="KW-0813">Transport</keyword>
<comment type="function">
    <text evidence="1">Component of the cytochrome b6-f complex, which mediates electron transfer between photosystem II (PSII) and photosystem I (PSI), cyclic electron flow around PSI, and state transitions. PetG is required for either the stability or assembly of the cytochrome b6-f complex.</text>
</comment>
<comment type="subunit">
    <text evidence="1">The 4 large subunits of the cytochrome b6-f complex are cytochrome b6, subunit IV (17 kDa polypeptide, PetD), cytochrome f and the Rieske protein, while the 4 small subunits are PetG, PetL, PetM and PetN. The complex functions as a dimer.</text>
</comment>
<comment type="subcellular location">
    <subcellularLocation>
        <location evidence="1">Plastid</location>
        <location evidence="1">Chloroplast thylakoid membrane</location>
        <topology evidence="1">Single-pass membrane protein</topology>
    </subcellularLocation>
</comment>
<comment type="similarity">
    <text evidence="1">Belongs to the PetG family.</text>
</comment>
<reference key="1">
    <citation type="submission" date="2007-03" db="EMBL/GenBank/DDBJ databases">
        <title>Sequencing analysis of Aethionema grandiflorum chloroplast DNA.</title>
        <authorList>
            <person name="Hosouchi T."/>
            <person name="Tsuruoka H."/>
            <person name="Kotani H."/>
        </authorList>
    </citation>
    <scope>NUCLEOTIDE SEQUENCE [LARGE SCALE GENOMIC DNA]</scope>
</reference>
<proteinExistence type="inferred from homology"/>
<sequence length="37" mass="4204">MIEVFLFGIVLGLIPITLAGLFVTAYLQYRRGDQLDF</sequence>
<geneLocation type="chloroplast"/>
<accession>A4QJL8</accession>
<gene>
    <name evidence="1" type="primary">petG</name>
</gene>
<name>PETG_AETGR</name>